<name>ARP6_ASPFU</name>
<feature type="chain" id="PRO_0000089111" description="Actin-like protein arp6">
    <location>
        <begin position="1"/>
        <end position="468"/>
    </location>
</feature>
<proteinExistence type="inferred from homology"/>
<reference key="1">
    <citation type="journal article" date="2005" name="Nature">
        <title>Genomic sequence of the pathogenic and allergenic filamentous fungus Aspergillus fumigatus.</title>
        <authorList>
            <person name="Nierman W.C."/>
            <person name="Pain A."/>
            <person name="Anderson M.J."/>
            <person name="Wortman J.R."/>
            <person name="Kim H.S."/>
            <person name="Arroyo J."/>
            <person name="Berriman M."/>
            <person name="Abe K."/>
            <person name="Archer D.B."/>
            <person name="Bermejo C."/>
            <person name="Bennett J.W."/>
            <person name="Bowyer P."/>
            <person name="Chen D."/>
            <person name="Collins M."/>
            <person name="Coulsen R."/>
            <person name="Davies R."/>
            <person name="Dyer P.S."/>
            <person name="Farman M.L."/>
            <person name="Fedorova N."/>
            <person name="Fedorova N.D."/>
            <person name="Feldblyum T.V."/>
            <person name="Fischer R."/>
            <person name="Fosker N."/>
            <person name="Fraser A."/>
            <person name="Garcia J.L."/>
            <person name="Garcia M.J."/>
            <person name="Goble A."/>
            <person name="Goldman G.H."/>
            <person name="Gomi K."/>
            <person name="Griffith-Jones S."/>
            <person name="Gwilliam R."/>
            <person name="Haas B.J."/>
            <person name="Haas H."/>
            <person name="Harris D.E."/>
            <person name="Horiuchi H."/>
            <person name="Huang J."/>
            <person name="Humphray S."/>
            <person name="Jimenez J."/>
            <person name="Keller N."/>
            <person name="Khouri H."/>
            <person name="Kitamoto K."/>
            <person name="Kobayashi T."/>
            <person name="Konzack S."/>
            <person name="Kulkarni R."/>
            <person name="Kumagai T."/>
            <person name="Lafton A."/>
            <person name="Latge J.-P."/>
            <person name="Li W."/>
            <person name="Lord A."/>
            <person name="Lu C."/>
            <person name="Majoros W.H."/>
            <person name="May G.S."/>
            <person name="Miller B.L."/>
            <person name="Mohamoud Y."/>
            <person name="Molina M."/>
            <person name="Monod M."/>
            <person name="Mouyna I."/>
            <person name="Mulligan S."/>
            <person name="Murphy L.D."/>
            <person name="O'Neil S."/>
            <person name="Paulsen I."/>
            <person name="Penalva M.A."/>
            <person name="Pertea M."/>
            <person name="Price C."/>
            <person name="Pritchard B.L."/>
            <person name="Quail M.A."/>
            <person name="Rabbinowitsch E."/>
            <person name="Rawlins N."/>
            <person name="Rajandream M.A."/>
            <person name="Reichard U."/>
            <person name="Renauld H."/>
            <person name="Robson G.D."/>
            <person name="Rodriguez de Cordoba S."/>
            <person name="Rodriguez-Pena J.M."/>
            <person name="Ronning C.M."/>
            <person name="Rutter S."/>
            <person name="Salzberg S.L."/>
            <person name="Sanchez M."/>
            <person name="Sanchez-Ferrero J.C."/>
            <person name="Saunders D."/>
            <person name="Seeger K."/>
            <person name="Squares R."/>
            <person name="Squares S."/>
            <person name="Takeuchi M."/>
            <person name="Tekaia F."/>
            <person name="Turner G."/>
            <person name="Vazquez de Aldana C.R."/>
            <person name="Weidman J."/>
            <person name="White O."/>
            <person name="Woodward J.R."/>
            <person name="Yu J.-H."/>
            <person name="Fraser C.M."/>
            <person name="Galagan J.E."/>
            <person name="Asai K."/>
            <person name="Machida M."/>
            <person name="Hall N."/>
            <person name="Barrell B.G."/>
            <person name="Denning D.W."/>
        </authorList>
    </citation>
    <scope>NUCLEOTIDE SEQUENCE [LARGE SCALE GENOMIC DNA]</scope>
    <source>
        <strain>ATCC MYA-4609 / CBS 101355 / FGSC A1100 / Af293</strain>
    </source>
</reference>
<sequence length="468" mass="51791">MGSTKPRTSAQASAPKVQSLPEKTFIIDNGAYTLKAGYAPGFPPPEDLGQALSACSTIPNAIAKTRGNRIYIGAQLNSQVTDWNEMVFRRPVEKGYIVNWEAQKEIWDNAFFDEKTVRSKDLRIESPEDTTLVLTEAPNALPTLQKNADEIVMEEWGFGGYVRFVGPVLNAWNEVQSLFGDPIGQDSSSPISPKQCLLVVDSGYSHTTVTPVYKGQPIQRAIRRLDIGGKHLTNYLKEMVSMRQYNMVDETYIMNEVKEAVCFVSNNFAGDLEQTWQGNRKRGLTDAAEGITVDYVLPDPNTGKKGFMRPHDPLSNAKKRKSILSGGNAEALSEDVLILGNERFTVPEILFTPSDIGMKQAGIPDIILQSLSVLPTGLHPSFLANVLVVGGNTLIPGFLERLESELRQIASAECVVRVRRPHDPIRSTWLGASRLAANRAELRKFAITRQEYQEYGSSWAGRKFSGIL</sequence>
<evidence type="ECO:0000250" key="1"/>
<evidence type="ECO:0000305" key="2"/>
<comment type="function">
    <text evidence="1">Component of the SWR1 complex which mediates the ATP-dependent exchange of histone H2A for the H2A variant HZT1 leading to transcriptional regulation of selected genes by chromatin remodeling. Involved in chromosome stability (By similarity).</text>
</comment>
<comment type="subunit">
    <text evidence="1">Component of the SWR1 chromatin remodeling complex.</text>
</comment>
<comment type="subcellular location">
    <subcellularLocation>
        <location evidence="1">Cytoplasm</location>
    </subcellularLocation>
    <subcellularLocation>
        <location evidence="1">Cytoplasm</location>
        <location evidence="1">Cytoskeleton</location>
    </subcellularLocation>
    <subcellularLocation>
        <location evidence="1">Nucleus</location>
    </subcellularLocation>
</comment>
<comment type="similarity">
    <text evidence="2">Belongs to the actin family. ARP6 subfamily.</text>
</comment>
<protein>
    <recommendedName>
        <fullName>Actin-like protein arp6</fullName>
    </recommendedName>
</protein>
<organism>
    <name type="scientific">Aspergillus fumigatus (strain ATCC MYA-4609 / CBS 101355 / FGSC A1100 / Af293)</name>
    <name type="common">Neosartorya fumigata</name>
    <dbReference type="NCBI Taxonomy" id="330879"/>
    <lineage>
        <taxon>Eukaryota</taxon>
        <taxon>Fungi</taxon>
        <taxon>Dikarya</taxon>
        <taxon>Ascomycota</taxon>
        <taxon>Pezizomycotina</taxon>
        <taxon>Eurotiomycetes</taxon>
        <taxon>Eurotiomycetidae</taxon>
        <taxon>Eurotiales</taxon>
        <taxon>Aspergillaceae</taxon>
        <taxon>Aspergillus</taxon>
        <taxon>Aspergillus subgen. Fumigati</taxon>
    </lineage>
</organism>
<accession>Q4W9M3</accession>
<dbReference type="EMBL" id="AAHF01000016">
    <property type="protein sequence ID" value="EAL84590.1"/>
    <property type="molecule type" value="Genomic_DNA"/>
</dbReference>
<dbReference type="RefSeq" id="XP_746628.1">
    <property type="nucleotide sequence ID" value="XM_741535.1"/>
</dbReference>
<dbReference type="SMR" id="Q4W9M3"/>
<dbReference type="FunCoup" id="Q4W9M3">
    <property type="interactions" value="302"/>
</dbReference>
<dbReference type="STRING" id="330879.Q4W9M3"/>
<dbReference type="EnsemblFungi" id="EAL84590">
    <property type="protein sequence ID" value="EAL84590"/>
    <property type="gene ID" value="AFUA_4G04420"/>
</dbReference>
<dbReference type="GeneID" id="3503987"/>
<dbReference type="KEGG" id="afm:AFUA_4G04420"/>
<dbReference type="VEuPathDB" id="FungiDB:Afu4g04420"/>
<dbReference type="eggNOG" id="KOG0680">
    <property type="taxonomic scope" value="Eukaryota"/>
</dbReference>
<dbReference type="HOGENOM" id="CLU_027965_1_1_1"/>
<dbReference type="InParanoid" id="Q4W9M3"/>
<dbReference type="OMA" id="FFEEYEC"/>
<dbReference type="OrthoDB" id="6220758at2759"/>
<dbReference type="Proteomes" id="UP000002530">
    <property type="component" value="Chromosome 4"/>
</dbReference>
<dbReference type="GO" id="GO:0005737">
    <property type="term" value="C:cytoplasm"/>
    <property type="evidence" value="ECO:0007669"/>
    <property type="project" value="UniProtKB-SubCell"/>
</dbReference>
<dbReference type="GO" id="GO:0005856">
    <property type="term" value="C:cytoskeleton"/>
    <property type="evidence" value="ECO:0007669"/>
    <property type="project" value="UniProtKB-SubCell"/>
</dbReference>
<dbReference type="GO" id="GO:0000812">
    <property type="term" value="C:Swr1 complex"/>
    <property type="evidence" value="ECO:0000318"/>
    <property type="project" value="GO_Central"/>
</dbReference>
<dbReference type="GO" id="GO:0031491">
    <property type="term" value="F:nucleosome binding"/>
    <property type="evidence" value="ECO:0000318"/>
    <property type="project" value="GO_Central"/>
</dbReference>
<dbReference type="GO" id="GO:0006338">
    <property type="term" value="P:chromatin remodeling"/>
    <property type="evidence" value="ECO:0007669"/>
    <property type="project" value="EnsemblFungi"/>
</dbReference>
<dbReference type="CDD" id="cd10210">
    <property type="entry name" value="ASKHA_NBD_Arp6"/>
    <property type="match status" value="1"/>
</dbReference>
<dbReference type="FunFam" id="2.30.36.70:FF:000011">
    <property type="entry name" value="Actin family protein"/>
    <property type="match status" value="1"/>
</dbReference>
<dbReference type="FunFam" id="3.90.640.10:FF:000036">
    <property type="entry name" value="Actin-like protein ARP6"/>
    <property type="match status" value="1"/>
</dbReference>
<dbReference type="FunFam" id="3.30.420.40:FF:000058">
    <property type="entry name" value="Putative actin-related protein 5"/>
    <property type="match status" value="1"/>
</dbReference>
<dbReference type="Gene3D" id="3.30.420.40">
    <property type="match status" value="2"/>
</dbReference>
<dbReference type="Gene3D" id="2.30.36.70">
    <property type="entry name" value="Actin, Chain A, domain 2"/>
    <property type="match status" value="1"/>
</dbReference>
<dbReference type="Gene3D" id="3.90.640.10">
    <property type="entry name" value="Actin, Chain A, domain 4"/>
    <property type="match status" value="1"/>
</dbReference>
<dbReference type="InterPro" id="IPR004000">
    <property type="entry name" value="Actin"/>
</dbReference>
<dbReference type="InterPro" id="IPR043129">
    <property type="entry name" value="ATPase_NBD"/>
</dbReference>
<dbReference type="PANTHER" id="PTHR11937">
    <property type="entry name" value="ACTIN"/>
    <property type="match status" value="1"/>
</dbReference>
<dbReference type="Pfam" id="PF00022">
    <property type="entry name" value="Actin"/>
    <property type="match status" value="1"/>
</dbReference>
<dbReference type="SMART" id="SM00268">
    <property type="entry name" value="ACTIN"/>
    <property type="match status" value="1"/>
</dbReference>
<dbReference type="SUPFAM" id="SSF53067">
    <property type="entry name" value="Actin-like ATPase domain"/>
    <property type="match status" value="2"/>
</dbReference>
<keyword id="KW-0010">Activator</keyword>
<keyword id="KW-0156">Chromatin regulator</keyword>
<keyword id="KW-0963">Cytoplasm</keyword>
<keyword id="KW-0206">Cytoskeleton</keyword>
<keyword id="KW-0539">Nucleus</keyword>
<keyword id="KW-1185">Reference proteome</keyword>
<keyword id="KW-0804">Transcription</keyword>
<keyword id="KW-0805">Transcription regulation</keyword>
<gene>
    <name type="primary">arp6</name>
    <name type="ORF">AFUA_4G04420</name>
</gene>